<organism>
    <name type="scientific">Nicotiana tabacum</name>
    <name type="common">Common tobacco</name>
    <dbReference type="NCBI Taxonomy" id="4097"/>
    <lineage>
        <taxon>Eukaryota</taxon>
        <taxon>Viridiplantae</taxon>
        <taxon>Streptophyta</taxon>
        <taxon>Embryophyta</taxon>
        <taxon>Tracheophyta</taxon>
        <taxon>Spermatophyta</taxon>
        <taxon>Magnoliopsida</taxon>
        <taxon>eudicotyledons</taxon>
        <taxon>Gunneridae</taxon>
        <taxon>Pentapetalae</taxon>
        <taxon>asterids</taxon>
        <taxon>lamiids</taxon>
        <taxon>Solanales</taxon>
        <taxon>Solanaceae</taxon>
        <taxon>Nicotianoideae</taxon>
        <taxon>Nicotianeae</taxon>
        <taxon>Nicotiana</taxon>
    </lineage>
</organism>
<reference key="1">
    <citation type="journal article" date="2002" name="Cell">
        <title>Expansion of the cell plate in plant cytokinesis requires a kinesin-like protein/MAPKKK complex.</title>
        <authorList>
            <person name="Nishihama R."/>
            <person name="Soyano T."/>
            <person name="Ishikawa M."/>
            <person name="Araki S."/>
            <person name="Tanaka H."/>
            <person name="Asada T."/>
            <person name="Irie K."/>
            <person name="Ito M."/>
            <person name="Terada M."/>
            <person name="Banno H."/>
            <person name="Yamazaki Y."/>
            <person name="Machida Y."/>
        </authorList>
    </citation>
    <scope>NUCLEOTIDE SEQUENCE [MRNA]</scope>
    <scope>FUNCTION</scope>
    <scope>INDUCTION</scope>
    <source>
        <strain>cv. Bright Yellow 2</strain>
    </source>
</reference>
<gene>
    <name type="primary">NACK2</name>
</gene>
<evidence type="ECO:0000250" key="1">
    <source>
        <dbReference type="UniProtKB" id="Q8S950"/>
    </source>
</evidence>
<evidence type="ECO:0000255" key="2"/>
<evidence type="ECO:0000255" key="3">
    <source>
        <dbReference type="PROSITE-ProRule" id="PRU00283"/>
    </source>
</evidence>
<evidence type="ECO:0000269" key="4">
    <source>
    </source>
</evidence>
<evidence type="ECO:0000305" key="5"/>
<keyword id="KW-0067">ATP-binding</keyword>
<keyword id="KW-0131">Cell cycle</keyword>
<keyword id="KW-0132">Cell division</keyword>
<keyword id="KW-0175">Coiled coil</keyword>
<keyword id="KW-0963">Cytoplasm</keyword>
<keyword id="KW-0206">Cytoskeleton</keyword>
<keyword id="KW-0493">Microtubule</keyword>
<keyword id="KW-0505">Motor protein</keyword>
<keyword id="KW-0547">Nucleotide-binding</keyword>
<keyword id="KW-0539">Nucleus</keyword>
<keyword id="KW-1185">Reference proteome</keyword>
<comment type="function">
    <text evidence="4">Probable plus end-directed motor protein that may function in the NACK-PQR (NPK1-NQK1/MEK1-NRK1) MAP kinase signaling pathway, which is essential for somatic cell cytokinesis, especially for the cell-plate formation and its expansion. May regulate the activity and the localization of NPK1, probably by association through the non-catalytic region of the kinase.</text>
</comment>
<comment type="subcellular location">
    <subcellularLocation>
        <location evidence="1">Cytoplasm</location>
    </subcellularLocation>
    <subcellularLocation>
        <location evidence="1">Nucleus</location>
    </subcellularLocation>
    <subcellularLocation>
        <location evidence="1">Cytoplasm</location>
        <location evidence="1">Cytoskeleton</location>
        <location evidence="1">Phragmoplast</location>
    </subcellularLocation>
</comment>
<comment type="induction">
    <text evidence="4">During the M phase of the cell cycle (at protein level).</text>
</comment>
<comment type="similarity">
    <text evidence="5">Belongs to the TRAFAC class myosin-kinesin ATPase superfamily. Kinesin family. KIN-7 subfamily.</text>
</comment>
<dbReference type="EMBL" id="AB071436">
    <property type="protein sequence ID" value="BAB86284.1"/>
    <property type="molecule type" value="mRNA"/>
</dbReference>
<dbReference type="RefSeq" id="NP_001312129.1">
    <property type="nucleotide sequence ID" value="NM_001325200.1"/>
</dbReference>
<dbReference type="SMR" id="Q8S949"/>
<dbReference type="STRING" id="4097.Q8S949"/>
<dbReference type="PaxDb" id="4097-Q8S949"/>
<dbReference type="GeneID" id="107775653"/>
<dbReference type="KEGG" id="nta:107775653"/>
<dbReference type="OrthoDB" id="3176171at2759"/>
<dbReference type="Proteomes" id="UP000084051">
    <property type="component" value="Unplaced"/>
</dbReference>
<dbReference type="GO" id="GO:0005874">
    <property type="term" value="C:microtubule"/>
    <property type="evidence" value="ECO:0007669"/>
    <property type="project" value="UniProtKB-KW"/>
</dbReference>
<dbReference type="GO" id="GO:0005634">
    <property type="term" value="C:nucleus"/>
    <property type="evidence" value="ECO:0007669"/>
    <property type="project" value="UniProtKB-SubCell"/>
</dbReference>
<dbReference type="GO" id="GO:0009524">
    <property type="term" value="C:phragmoplast"/>
    <property type="evidence" value="ECO:0007669"/>
    <property type="project" value="UniProtKB-SubCell"/>
</dbReference>
<dbReference type="GO" id="GO:0005524">
    <property type="term" value="F:ATP binding"/>
    <property type="evidence" value="ECO:0007669"/>
    <property type="project" value="UniProtKB-KW"/>
</dbReference>
<dbReference type="GO" id="GO:0008017">
    <property type="term" value="F:microtubule binding"/>
    <property type="evidence" value="ECO:0007669"/>
    <property type="project" value="InterPro"/>
</dbReference>
<dbReference type="GO" id="GO:0003777">
    <property type="term" value="F:microtubule motor activity"/>
    <property type="evidence" value="ECO:0007669"/>
    <property type="project" value="InterPro"/>
</dbReference>
<dbReference type="GO" id="GO:0000919">
    <property type="term" value="P:cell plate assembly"/>
    <property type="evidence" value="ECO:0000316"/>
    <property type="project" value="UniProtKB"/>
</dbReference>
<dbReference type="GO" id="GO:0007018">
    <property type="term" value="P:microtubule-based movement"/>
    <property type="evidence" value="ECO:0007669"/>
    <property type="project" value="InterPro"/>
</dbReference>
<dbReference type="CDD" id="cd01374">
    <property type="entry name" value="KISc_CENP_E"/>
    <property type="match status" value="1"/>
</dbReference>
<dbReference type="FunFam" id="3.40.850.10:FF:000016">
    <property type="entry name" value="Kinesin-like protein"/>
    <property type="match status" value="1"/>
</dbReference>
<dbReference type="Gene3D" id="3.40.850.10">
    <property type="entry name" value="Kinesin motor domain"/>
    <property type="match status" value="1"/>
</dbReference>
<dbReference type="InterPro" id="IPR027640">
    <property type="entry name" value="Kinesin-like_fam"/>
</dbReference>
<dbReference type="InterPro" id="IPR019821">
    <property type="entry name" value="Kinesin_motor_CS"/>
</dbReference>
<dbReference type="InterPro" id="IPR001752">
    <property type="entry name" value="Kinesin_motor_dom"/>
</dbReference>
<dbReference type="InterPro" id="IPR036961">
    <property type="entry name" value="Kinesin_motor_dom_sf"/>
</dbReference>
<dbReference type="InterPro" id="IPR021881">
    <property type="entry name" value="NACK_C"/>
</dbReference>
<dbReference type="InterPro" id="IPR027417">
    <property type="entry name" value="P-loop_NTPase"/>
</dbReference>
<dbReference type="PANTHER" id="PTHR47968">
    <property type="entry name" value="CENTROMERE PROTEIN E"/>
    <property type="match status" value="1"/>
</dbReference>
<dbReference type="PANTHER" id="PTHR47968:SF39">
    <property type="entry name" value="KINESIN-LIKE PROTEIN KIN-7B"/>
    <property type="match status" value="1"/>
</dbReference>
<dbReference type="Pfam" id="PF11995">
    <property type="entry name" value="DUF3490"/>
    <property type="match status" value="1"/>
</dbReference>
<dbReference type="Pfam" id="PF00225">
    <property type="entry name" value="Kinesin"/>
    <property type="match status" value="1"/>
</dbReference>
<dbReference type="PRINTS" id="PR00380">
    <property type="entry name" value="KINESINHEAVY"/>
</dbReference>
<dbReference type="SMART" id="SM00129">
    <property type="entry name" value="KISc"/>
    <property type="match status" value="1"/>
</dbReference>
<dbReference type="SUPFAM" id="SSF52540">
    <property type="entry name" value="P-loop containing nucleoside triphosphate hydrolases"/>
    <property type="match status" value="1"/>
</dbReference>
<dbReference type="PROSITE" id="PS00411">
    <property type="entry name" value="KINESIN_MOTOR_1"/>
    <property type="match status" value="1"/>
</dbReference>
<dbReference type="PROSITE" id="PS50067">
    <property type="entry name" value="KINESIN_MOTOR_2"/>
    <property type="match status" value="1"/>
</dbReference>
<name>KN7B_TOBAC</name>
<accession>Q8S949</accession>
<protein>
    <recommendedName>
        <fullName>Kinesin-like protein NACK2</fullName>
    </recommendedName>
    <alternativeName>
        <fullName>NPK1-activating kinesin 2</fullName>
    </alternativeName>
</protein>
<sequence>MVIGTPVTTPLSKIVRTPSRVPGSRRTTPSKIREEKILVTIRVRPLSPKEQAAYDLIAWDFPDEQTIVSKNLNHERHTGPYSFDYVFDPTCSTSKVYEQGARDVALSALNGINATIFAYGQTSSGKTFTMRGITESAVNDIYGRIKLTTERDFVLKFSALEIYNETVVDLLNRESVSLRLLDDPEKGVIVEKQVEEIVKDEEHLKTLIGTVEAHRQVGETALNDKSSRSHQIIRLTIESSIRENSGCVKSFLATLNLVDLAGSERASQTSADGTRLKEGSHINRSLLTVTNVIRKLSCSGGKRSGHIPYRDSKLTRILQASLGGNSRTAIICTLSPALSHLEQSRNTLCFATSAKEVTTTAQVNMVVAEKQLLKHLQKEVSRLEAELRSPDPAASPCLRSLLIEKERKIQKMEEEMNELKRQRDLAQSQLELERRSKKELKGSDHHGPSRQVVKCLSFTPEDEEVSGASLSTNLGRKSLLERQAAIRRSTNSTNPSMLVHEIRKLEMRQRQLGDEANHALQLLHKEFASHRIGSQGATETIAKLFSEIKELQKISCIPEQIEIKDKASLKEEIARLRSQESNIASLEQKLENVQRSIDELVMHLPSCHESADSRTAPSKKKRVLPFNLSNTSNIPNIIRSPCSPMSPSSCNIVEGEIENRAPPECNNVGSAGDSFCSQLSTPVKSKDDNCTPGSRQSNSVNMKKMQTMFKKAAEDNIRSIKAYVTELKERVAKLQYQKQLLVCQVLELEANEAASDEADISDQSPLSWHLVFEDQRQQIIMLWHLCHVSLVHRTQFYMLFKGDPSDQIYLEVELRRLTWLDEHLAGLGNASPALLGDDAAGYVSSSIKALKQEREYLAKRVSSKLNAEEREMLYVKWDIPPDGKQRRRLQLVNKLWSDPLNMQNVRDSAEVVAKLVGFCETGEHVSKEMFQLNFVSPSDKKTWIGWNLISNLLHL</sequence>
<proteinExistence type="evidence at protein level"/>
<feature type="chain" id="PRO_0000422319" description="Kinesin-like protein NACK2">
    <location>
        <begin position="1"/>
        <end position="955"/>
    </location>
</feature>
<feature type="domain" description="Kinesin motor" evidence="3">
    <location>
        <begin position="36"/>
        <end position="357"/>
    </location>
</feature>
<feature type="coiled-coil region" evidence="2">
    <location>
        <begin position="366"/>
        <end position="443"/>
    </location>
</feature>
<feature type="coiled-coil region" evidence="2">
    <location>
        <begin position="566"/>
        <end position="604"/>
    </location>
</feature>
<feature type="binding site" evidence="3">
    <location>
        <begin position="120"/>
        <end position="127"/>
    </location>
    <ligand>
        <name>ATP</name>
        <dbReference type="ChEBI" id="CHEBI:30616"/>
    </ligand>
</feature>